<protein>
    <recommendedName>
        <fullName>F-box protein PP2-B15</fullName>
    </recommendedName>
    <alternativeName>
        <fullName>Protein PHLOEM PROTEIN 2-LIKE B15</fullName>
        <shortName>AtPP2-B15</shortName>
    </alternativeName>
</protein>
<reference key="1">
    <citation type="journal article" date="2000" name="Nature">
        <title>Sequence and analysis of chromosome 1 of the plant Arabidopsis thaliana.</title>
        <authorList>
            <person name="Theologis A."/>
            <person name="Ecker J.R."/>
            <person name="Palm C.J."/>
            <person name="Federspiel N.A."/>
            <person name="Kaul S."/>
            <person name="White O."/>
            <person name="Alonso J."/>
            <person name="Altafi H."/>
            <person name="Araujo R."/>
            <person name="Bowman C.L."/>
            <person name="Brooks S.Y."/>
            <person name="Buehler E."/>
            <person name="Chan A."/>
            <person name="Chao Q."/>
            <person name="Chen H."/>
            <person name="Cheuk R.F."/>
            <person name="Chin C.W."/>
            <person name="Chung M.K."/>
            <person name="Conn L."/>
            <person name="Conway A.B."/>
            <person name="Conway A.R."/>
            <person name="Creasy T.H."/>
            <person name="Dewar K."/>
            <person name="Dunn P."/>
            <person name="Etgu P."/>
            <person name="Feldblyum T.V."/>
            <person name="Feng J.-D."/>
            <person name="Fong B."/>
            <person name="Fujii C.Y."/>
            <person name="Gill J.E."/>
            <person name="Goldsmith A.D."/>
            <person name="Haas B."/>
            <person name="Hansen N.F."/>
            <person name="Hughes B."/>
            <person name="Huizar L."/>
            <person name="Hunter J.L."/>
            <person name="Jenkins J."/>
            <person name="Johnson-Hopson C."/>
            <person name="Khan S."/>
            <person name="Khaykin E."/>
            <person name="Kim C.J."/>
            <person name="Koo H.L."/>
            <person name="Kremenetskaia I."/>
            <person name="Kurtz D.B."/>
            <person name="Kwan A."/>
            <person name="Lam B."/>
            <person name="Langin-Hooper S."/>
            <person name="Lee A."/>
            <person name="Lee J.M."/>
            <person name="Lenz C.A."/>
            <person name="Li J.H."/>
            <person name="Li Y.-P."/>
            <person name="Lin X."/>
            <person name="Liu S.X."/>
            <person name="Liu Z.A."/>
            <person name="Luros J.S."/>
            <person name="Maiti R."/>
            <person name="Marziali A."/>
            <person name="Militscher J."/>
            <person name="Miranda M."/>
            <person name="Nguyen M."/>
            <person name="Nierman W.C."/>
            <person name="Osborne B.I."/>
            <person name="Pai G."/>
            <person name="Peterson J."/>
            <person name="Pham P.K."/>
            <person name="Rizzo M."/>
            <person name="Rooney T."/>
            <person name="Rowley D."/>
            <person name="Sakano H."/>
            <person name="Salzberg S.L."/>
            <person name="Schwartz J.R."/>
            <person name="Shinn P."/>
            <person name="Southwick A.M."/>
            <person name="Sun H."/>
            <person name="Tallon L.J."/>
            <person name="Tambunga G."/>
            <person name="Toriumi M.J."/>
            <person name="Town C.D."/>
            <person name="Utterback T."/>
            <person name="Van Aken S."/>
            <person name="Vaysberg M."/>
            <person name="Vysotskaia V.S."/>
            <person name="Walker M."/>
            <person name="Wu D."/>
            <person name="Yu G."/>
            <person name="Fraser C.M."/>
            <person name="Venter J.C."/>
            <person name="Davis R.W."/>
        </authorList>
    </citation>
    <scope>NUCLEOTIDE SEQUENCE [LARGE SCALE GENOMIC DNA]</scope>
    <source>
        <strain>cv. Columbia</strain>
    </source>
</reference>
<reference key="2">
    <citation type="journal article" date="2017" name="Plant J.">
        <title>Araport11: a complete reannotation of the Arabidopsis thaliana reference genome.</title>
        <authorList>
            <person name="Cheng C.Y."/>
            <person name="Krishnakumar V."/>
            <person name="Chan A.P."/>
            <person name="Thibaud-Nissen F."/>
            <person name="Schobel S."/>
            <person name="Town C.D."/>
        </authorList>
    </citation>
    <scope>GENOME REANNOTATION</scope>
    <source>
        <strain>cv. Columbia</strain>
    </source>
</reference>
<reference key="3">
    <citation type="submission" date="2002-03" db="EMBL/GenBank/DDBJ databases">
        <title>Full-length cDNA from Arabidopsis thaliana.</title>
        <authorList>
            <person name="Brover V.V."/>
            <person name="Troukhan M.E."/>
            <person name="Alexandrov N.A."/>
            <person name="Lu Y.-P."/>
            <person name="Flavell R.B."/>
            <person name="Feldmann K.A."/>
        </authorList>
    </citation>
    <scope>NUCLEOTIDE SEQUENCE [LARGE SCALE MRNA]</scope>
</reference>
<reference key="4">
    <citation type="journal article" date="2003" name="Plant Physiol.">
        <title>Diversity of the superfamily of phloem lectins (phloem protein 2) in angiosperms.</title>
        <authorList>
            <person name="Dinant S."/>
            <person name="Clark A.M."/>
            <person name="Zhu Y."/>
            <person name="Vilaine F."/>
            <person name="Palauqui J.-C."/>
            <person name="Kusiak C."/>
            <person name="Thompson G.A."/>
        </authorList>
    </citation>
    <scope>GENE FAMILY</scope>
    <scope>NOMENCLATURE</scope>
</reference>
<keyword id="KW-1185">Reference proteome</keyword>
<comment type="sequence caution" evidence="1">
    <conflict type="erroneous initiation">
        <sequence resource="EMBL-CDS" id="AAC24090"/>
    </conflict>
    <text>Truncated N-terminus.</text>
</comment>
<comment type="sequence caution" evidence="1">
    <conflict type="erroneous initiation">
        <sequence resource="EMBL-CDS" id="AAM64609"/>
    </conflict>
    <text>Truncated N-terminus.</text>
</comment>
<organism>
    <name type="scientific">Arabidopsis thaliana</name>
    <name type="common">Mouse-ear cress</name>
    <dbReference type="NCBI Taxonomy" id="3702"/>
    <lineage>
        <taxon>Eukaryota</taxon>
        <taxon>Viridiplantae</taxon>
        <taxon>Streptophyta</taxon>
        <taxon>Embryophyta</taxon>
        <taxon>Tracheophyta</taxon>
        <taxon>Spermatophyta</taxon>
        <taxon>Magnoliopsida</taxon>
        <taxon>eudicotyledons</taxon>
        <taxon>Gunneridae</taxon>
        <taxon>Pentapetalae</taxon>
        <taxon>rosids</taxon>
        <taxon>malvids</taxon>
        <taxon>Brassicales</taxon>
        <taxon>Brassicaceae</taxon>
        <taxon>Camelineae</taxon>
        <taxon>Arabidopsis</taxon>
    </lineage>
</organism>
<name>P2B15_ARATH</name>
<proteinExistence type="evidence at transcript level"/>
<dbReference type="EMBL" id="AC003114">
    <property type="protein sequence ID" value="AAC24090.1"/>
    <property type="status" value="ALT_INIT"/>
    <property type="molecule type" value="Genomic_DNA"/>
</dbReference>
<dbReference type="EMBL" id="CP002684">
    <property type="protein sequence ID" value="AEE28403.1"/>
    <property type="molecule type" value="Genomic_DNA"/>
</dbReference>
<dbReference type="EMBL" id="AY087048">
    <property type="protein sequence ID" value="AAM64609.1"/>
    <property type="status" value="ALT_INIT"/>
    <property type="molecule type" value="mRNA"/>
</dbReference>
<dbReference type="PIR" id="G86223">
    <property type="entry name" value="G86223"/>
</dbReference>
<dbReference type="SMR" id="O80494"/>
<dbReference type="FunCoup" id="O80494">
    <property type="interactions" value="15"/>
</dbReference>
<dbReference type="STRING" id="3702.O80494"/>
<dbReference type="PaxDb" id="3702-AT1G09155.1"/>
<dbReference type="ProteomicsDB" id="248867"/>
<dbReference type="EnsemblPlants" id="AT1G09155.1">
    <property type="protein sequence ID" value="AT1G09155.1"/>
    <property type="gene ID" value="AT1G09155"/>
</dbReference>
<dbReference type="Gramene" id="AT1G09155.1">
    <property type="protein sequence ID" value="AT1G09155.1"/>
    <property type="gene ID" value="AT1G09155"/>
</dbReference>
<dbReference type="KEGG" id="ath:AT1G09155"/>
<dbReference type="Araport" id="AT1G09155"/>
<dbReference type="TAIR" id="AT1G09155">
    <property type="gene designation" value="PP2-B15"/>
</dbReference>
<dbReference type="eggNOG" id="ENOG502QRA4">
    <property type="taxonomic scope" value="Eukaryota"/>
</dbReference>
<dbReference type="HOGENOM" id="CLU_050973_0_0_1"/>
<dbReference type="InParanoid" id="O80494"/>
<dbReference type="OMA" id="GQREQRM"/>
<dbReference type="OrthoDB" id="1918565at2759"/>
<dbReference type="PRO" id="PR:O80494"/>
<dbReference type="Proteomes" id="UP000006548">
    <property type="component" value="Chromosome 1"/>
</dbReference>
<dbReference type="ExpressionAtlas" id="O80494">
    <property type="expression patterns" value="baseline and differential"/>
</dbReference>
<dbReference type="GO" id="GO:0030246">
    <property type="term" value="F:carbohydrate binding"/>
    <property type="evidence" value="ECO:0000250"/>
    <property type="project" value="TAIR"/>
</dbReference>
<dbReference type="CDD" id="cd22162">
    <property type="entry name" value="F-box_AtSKIP3-like"/>
    <property type="match status" value="1"/>
</dbReference>
<dbReference type="InterPro" id="IPR036047">
    <property type="entry name" value="F-box-like_dom_sf"/>
</dbReference>
<dbReference type="InterPro" id="IPR025886">
    <property type="entry name" value="PP2-like"/>
</dbReference>
<dbReference type="PANTHER" id="PTHR32278">
    <property type="entry name" value="F-BOX DOMAIN-CONTAINING PROTEIN"/>
    <property type="match status" value="1"/>
</dbReference>
<dbReference type="PANTHER" id="PTHR32278:SF122">
    <property type="entry name" value="F-BOX PROTEIN PP2-B15"/>
    <property type="match status" value="1"/>
</dbReference>
<dbReference type="Pfam" id="PF14299">
    <property type="entry name" value="PP2"/>
    <property type="match status" value="1"/>
</dbReference>
<dbReference type="SUPFAM" id="SSF81383">
    <property type="entry name" value="F-box domain"/>
    <property type="match status" value="1"/>
</dbReference>
<sequence>MMLPEACVATILSFTTPADTISSAAVSSVFRVAGDSDFVWEKFLPTDYCHVISRSTDPHRIFSSKKELYRCLCESILIDNGRKIFKIEKLSGKISYILSSRDLSITWSDQRHYWSWSPRSDSRFSEGVQLIMTDWLEIIGKIQTGALSPNTNYGAYLIMKVTSRAYGLDLVPAETSIKVGNGEKKIKSTYLSCLDNKKQQMERVFYGQREQRMATHEVVRSHRREPEVRDDGWMEIELGEFETGSGEGDDDKEVVMSLTEVKGYQLKGGIAIDGIEVRPKPLKVRAGTN</sequence>
<gene>
    <name type="primary">PP2B15</name>
    <name type="ordered locus">At1g09155</name>
    <name type="ORF">T12M4.17</name>
</gene>
<accession>O80494</accession>
<accession>Q8LBR0</accession>
<feature type="chain" id="PRO_0000272223" description="F-box protein PP2-B15">
    <location>
        <begin position="1"/>
        <end position="289"/>
    </location>
</feature>
<feature type="domain" description="F-box">
    <location>
        <begin position="1"/>
        <end position="43"/>
    </location>
</feature>
<evidence type="ECO:0000305" key="1"/>